<gene>
    <name type="primary">rpl1</name>
</gene>
<proteinExistence type="inferred from homology"/>
<comment type="function">
    <text evidence="2">Binds directly to 23S rRNA. Might be involved in E site tRNA release (Potential).</text>
</comment>
<comment type="subunit">
    <text evidence="1">Part of the 50S ribosomal subunit.</text>
</comment>
<comment type="subcellular location">
    <subcellularLocation>
        <location>Plastid</location>
        <location>Chloroplast</location>
    </subcellularLocation>
</comment>
<comment type="similarity">
    <text evidence="2">Belongs to the universal ribosomal protein uL1 family.</text>
</comment>
<sequence>MRKLSRRQKENRAKTKDSIYSNLEDAITILQETATAKFTETVELHANLNIDPKYADQQLRTTVTLPHGIGKTINIAVLTNDSNFTEAREAGADRVGSDDLIEEISQGNISFDLLIATPDMMPKLAKLGRVLGPKGLMPSPKSGTVSTTLTATLSEFKKGKFEYKADKAGVVHVSFGKSNFTHSQLMENLTALYKSIEQNRPSGVKGKYFKSLFICTTMGPSIQLDLNIFL</sequence>
<name>RK1_TRICV</name>
<accession>P49544</accession>
<evidence type="ECO:0000250" key="1"/>
<evidence type="ECO:0000305" key="2"/>
<keyword id="KW-0150">Chloroplast</keyword>
<keyword id="KW-0934">Plastid</keyword>
<keyword id="KW-0687">Ribonucleoprotein</keyword>
<keyword id="KW-0689">Ribosomal protein</keyword>
<keyword id="KW-0694">RNA-binding</keyword>
<keyword id="KW-0699">rRNA-binding</keyword>
<geneLocation type="chloroplast"/>
<dbReference type="EMBL" id="Z67753">
    <property type="protein sequence ID" value="CAA91726.1"/>
    <property type="molecule type" value="Genomic_DNA"/>
</dbReference>
<dbReference type="PIR" id="S78353">
    <property type="entry name" value="S78353"/>
</dbReference>
<dbReference type="RefSeq" id="NP_043694.1">
    <property type="nucleotide sequence ID" value="NC_001713.1"/>
</dbReference>
<dbReference type="SMR" id="P49544"/>
<dbReference type="GeneID" id="801740"/>
<dbReference type="GO" id="GO:0009507">
    <property type="term" value="C:chloroplast"/>
    <property type="evidence" value="ECO:0007669"/>
    <property type="project" value="UniProtKB-SubCell"/>
</dbReference>
<dbReference type="GO" id="GO:0015934">
    <property type="term" value="C:large ribosomal subunit"/>
    <property type="evidence" value="ECO:0007669"/>
    <property type="project" value="InterPro"/>
</dbReference>
<dbReference type="GO" id="GO:0019843">
    <property type="term" value="F:rRNA binding"/>
    <property type="evidence" value="ECO:0007669"/>
    <property type="project" value="UniProtKB-UniRule"/>
</dbReference>
<dbReference type="GO" id="GO:0003735">
    <property type="term" value="F:structural constituent of ribosome"/>
    <property type="evidence" value="ECO:0007669"/>
    <property type="project" value="InterPro"/>
</dbReference>
<dbReference type="GO" id="GO:0006412">
    <property type="term" value="P:translation"/>
    <property type="evidence" value="ECO:0007669"/>
    <property type="project" value="UniProtKB-UniRule"/>
</dbReference>
<dbReference type="CDD" id="cd00403">
    <property type="entry name" value="Ribosomal_L1"/>
    <property type="match status" value="1"/>
</dbReference>
<dbReference type="FunFam" id="3.40.50.790:FF:000001">
    <property type="entry name" value="50S ribosomal protein L1"/>
    <property type="match status" value="1"/>
</dbReference>
<dbReference type="Gene3D" id="3.30.190.20">
    <property type="match status" value="1"/>
</dbReference>
<dbReference type="Gene3D" id="3.40.50.790">
    <property type="match status" value="1"/>
</dbReference>
<dbReference type="HAMAP" id="MF_01318_B">
    <property type="entry name" value="Ribosomal_uL1_B"/>
    <property type="match status" value="1"/>
</dbReference>
<dbReference type="InterPro" id="IPR005878">
    <property type="entry name" value="Ribosom_uL1_bac-type"/>
</dbReference>
<dbReference type="InterPro" id="IPR002143">
    <property type="entry name" value="Ribosomal_uL1"/>
</dbReference>
<dbReference type="InterPro" id="IPR023674">
    <property type="entry name" value="Ribosomal_uL1-like"/>
</dbReference>
<dbReference type="InterPro" id="IPR028364">
    <property type="entry name" value="Ribosomal_uL1/biogenesis"/>
</dbReference>
<dbReference type="InterPro" id="IPR016095">
    <property type="entry name" value="Ribosomal_uL1_3-a/b-sand"/>
</dbReference>
<dbReference type="InterPro" id="IPR023673">
    <property type="entry name" value="Ribosomal_uL1_CS"/>
</dbReference>
<dbReference type="NCBIfam" id="TIGR01169">
    <property type="entry name" value="rplA_bact"/>
    <property type="match status" value="1"/>
</dbReference>
<dbReference type="PANTHER" id="PTHR36427">
    <property type="entry name" value="54S RIBOSOMAL PROTEIN L1, MITOCHONDRIAL"/>
    <property type="match status" value="1"/>
</dbReference>
<dbReference type="PANTHER" id="PTHR36427:SF3">
    <property type="entry name" value="LARGE RIBOSOMAL SUBUNIT PROTEIN UL1M"/>
    <property type="match status" value="1"/>
</dbReference>
<dbReference type="Pfam" id="PF00687">
    <property type="entry name" value="Ribosomal_L1"/>
    <property type="match status" value="1"/>
</dbReference>
<dbReference type="PIRSF" id="PIRSF002155">
    <property type="entry name" value="Ribosomal_L1"/>
    <property type="match status" value="1"/>
</dbReference>
<dbReference type="SUPFAM" id="SSF56808">
    <property type="entry name" value="Ribosomal protein L1"/>
    <property type="match status" value="1"/>
</dbReference>
<dbReference type="PROSITE" id="PS01199">
    <property type="entry name" value="RIBOSOMAL_L1"/>
    <property type="match status" value="1"/>
</dbReference>
<organism>
    <name type="scientific">Trieres chinensis</name>
    <name type="common">Marine centric diatom</name>
    <name type="synonym">Odontella sinensis</name>
    <dbReference type="NCBI Taxonomy" id="1514140"/>
    <lineage>
        <taxon>Eukaryota</taxon>
        <taxon>Sar</taxon>
        <taxon>Stramenopiles</taxon>
        <taxon>Ochrophyta</taxon>
        <taxon>Bacillariophyta</taxon>
        <taxon>Mediophyceae</taxon>
        <taxon>Biddulphiophycidae</taxon>
        <taxon>Eupodiscales</taxon>
        <taxon>Parodontellaceae</taxon>
        <taxon>Trieres</taxon>
    </lineage>
</organism>
<reference key="1">
    <citation type="journal article" date="1995" name="Plant Mol. Biol. Rep.">
        <title>The chloroplast genome of a chlorophyll a+c-containing alga, Odontella sinensis.</title>
        <authorList>
            <person name="Kowallik K.V."/>
            <person name="Stoebe B."/>
            <person name="Schaffran I."/>
            <person name="Kroth-Pancic P."/>
            <person name="Freier U."/>
        </authorList>
    </citation>
    <scope>NUCLEOTIDE SEQUENCE [LARGE SCALE GENOMIC DNA]</scope>
</reference>
<feature type="chain" id="PRO_0000125790" description="Large ribosomal subunit protein uL1c">
    <location>
        <begin position="1"/>
        <end position="230"/>
    </location>
</feature>
<protein>
    <recommendedName>
        <fullName evidence="2">Large ribosomal subunit protein uL1c</fullName>
    </recommendedName>
    <alternativeName>
        <fullName>50S ribosomal protein L1, chloroplastic</fullName>
    </alternativeName>
</protein>